<sequence length="194" mass="21137">MSEWVEQRLQSLAKAFDQSYCGAIEAVVDLICQRFQAGNKLLICGNGGSAADAQHLAAEFVGRFHFNRQALPAIALTANSSILTSVSNDYTYDIVFSRQVEALGQPGDILWGLSTSGKSTNVLHALKCAKDKGLHTIGMAGNNGGLFQEFADYPLFVADKNTPCIQEVHLMTYHHICEQVESRLFAQKSVGIKV</sequence>
<accession>Q55797</accession>
<reference key="1">
    <citation type="journal article" date="1995" name="DNA Res.">
        <title>Sequence analysis of the genome of the unicellular cyanobacterium Synechocystis sp. strain PCC6803. I. Sequence features in the 1 Mb region from map positions 64% to 92% of the genome.</title>
        <authorList>
            <person name="Kaneko T."/>
            <person name="Tanaka A."/>
            <person name="Sato S."/>
            <person name="Kotani H."/>
            <person name="Sazuka T."/>
            <person name="Miyajima N."/>
            <person name="Sugiura M."/>
            <person name="Tabata S."/>
        </authorList>
    </citation>
    <scope>NUCLEOTIDE SEQUENCE [LARGE SCALE GENOMIC DNA]</scope>
    <source>
        <strain>ATCC 27184 / PCC 6803 / N-1</strain>
    </source>
</reference>
<reference key="2">
    <citation type="journal article" date="1996" name="DNA Res.">
        <title>Sequence analysis of the genome of the unicellular cyanobacterium Synechocystis sp. strain PCC6803. II. Sequence determination of the entire genome and assignment of potential protein-coding regions.</title>
        <authorList>
            <person name="Kaneko T."/>
            <person name="Sato S."/>
            <person name="Kotani H."/>
            <person name="Tanaka A."/>
            <person name="Asamizu E."/>
            <person name="Nakamura Y."/>
            <person name="Miyajima N."/>
            <person name="Hirosawa M."/>
            <person name="Sugiura M."/>
            <person name="Sasamoto S."/>
            <person name="Kimura T."/>
            <person name="Hosouchi T."/>
            <person name="Matsuno A."/>
            <person name="Muraki A."/>
            <person name="Nakazaki N."/>
            <person name="Naruo K."/>
            <person name="Okumura S."/>
            <person name="Shimpo S."/>
            <person name="Takeuchi C."/>
            <person name="Wada T."/>
            <person name="Watanabe A."/>
            <person name="Yamada M."/>
            <person name="Yasuda M."/>
            <person name="Tabata S."/>
        </authorList>
    </citation>
    <scope>NUCLEOTIDE SEQUENCE [LARGE SCALE GENOMIC DNA]</scope>
    <source>
        <strain>ATCC 27184 / PCC 6803 / Kazusa</strain>
    </source>
</reference>
<gene>
    <name evidence="1" type="primary">gmhA</name>
    <name type="ordered locus">sll0083</name>
</gene>
<organism>
    <name type="scientific">Synechocystis sp. (strain ATCC 27184 / PCC 6803 / Kazusa)</name>
    <dbReference type="NCBI Taxonomy" id="1111708"/>
    <lineage>
        <taxon>Bacteria</taxon>
        <taxon>Bacillati</taxon>
        <taxon>Cyanobacteriota</taxon>
        <taxon>Cyanophyceae</taxon>
        <taxon>Synechococcales</taxon>
        <taxon>Merismopediaceae</taxon>
        <taxon>Synechocystis</taxon>
    </lineage>
</organism>
<name>GMHA_SYNY3</name>
<protein>
    <recommendedName>
        <fullName evidence="1">Phosphoheptose isomerase</fullName>
        <ecNumber evidence="1">5.3.1.28</ecNumber>
    </recommendedName>
    <alternativeName>
        <fullName evidence="1">Sedoheptulose 7-phosphate isomerase</fullName>
    </alternativeName>
</protein>
<feature type="chain" id="PRO_0000136547" description="Phosphoheptose isomerase">
    <location>
        <begin position="1"/>
        <end position="194"/>
    </location>
</feature>
<feature type="domain" description="SIS" evidence="1">
    <location>
        <begin position="31"/>
        <end position="186"/>
    </location>
</feature>
<feature type="binding site" evidence="1">
    <location>
        <begin position="46"/>
        <end position="48"/>
    </location>
    <ligand>
        <name>substrate</name>
    </ligand>
</feature>
<feature type="binding site" evidence="1">
    <location>
        <position position="55"/>
    </location>
    <ligand>
        <name>Zn(2+)</name>
        <dbReference type="ChEBI" id="CHEBI:29105"/>
    </ligand>
</feature>
<feature type="binding site" evidence="1">
    <location>
        <position position="59"/>
    </location>
    <ligand>
        <name>substrate</name>
    </ligand>
</feature>
<feature type="binding site" evidence="1">
    <location>
        <position position="59"/>
    </location>
    <ligand>
        <name>Zn(2+)</name>
        <dbReference type="ChEBI" id="CHEBI:29105"/>
    </ligand>
</feature>
<feature type="binding site" evidence="1">
    <location>
        <begin position="88"/>
        <end position="89"/>
    </location>
    <ligand>
        <name>substrate</name>
    </ligand>
</feature>
<feature type="binding site" evidence="1">
    <location>
        <begin position="114"/>
        <end position="116"/>
    </location>
    <ligand>
        <name>substrate</name>
    </ligand>
</feature>
<feature type="binding site" evidence="1">
    <location>
        <position position="119"/>
    </location>
    <ligand>
        <name>substrate</name>
    </ligand>
</feature>
<feature type="binding site" evidence="1">
    <location>
        <position position="166"/>
    </location>
    <ligand>
        <name>substrate</name>
    </ligand>
</feature>
<feature type="binding site" evidence="1">
    <location>
        <position position="166"/>
    </location>
    <ligand>
        <name>Zn(2+)</name>
        <dbReference type="ChEBI" id="CHEBI:29105"/>
    </ligand>
</feature>
<feature type="binding site" evidence="1">
    <location>
        <position position="174"/>
    </location>
    <ligand>
        <name>Zn(2+)</name>
        <dbReference type="ChEBI" id="CHEBI:29105"/>
    </ligand>
</feature>
<dbReference type="EC" id="5.3.1.28" evidence="1"/>
<dbReference type="EMBL" id="BA000022">
    <property type="protein sequence ID" value="BAA10549.1"/>
    <property type="molecule type" value="Genomic_DNA"/>
</dbReference>
<dbReference type="PIR" id="S76605">
    <property type="entry name" value="S76605"/>
</dbReference>
<dbReference type="SMR" id="Q55797"/>
<dbReference type="STRING" id="1148.gene:10500053"/>
<dbReference type="PaxDb" id="1148-1001712"/>
<dbReference type="EnsemblBacteria" id="BAA10549">
    <property type="protein sequence ID" value="BAA10549"/>
    <property type="gene ID" value="BAA10549"/>
</dbReference>
<dbReference type="KEGG" id="syn:sll0083"/>
<dbReference type="eggNOG" id="COG0279">
    <property type="taxonomic scope" value="Bacteria"/>
</dbReference>
<dbReference type="InParanoid" id="Q55797"/>
<dbReference type="PhylomeDB" id="Q55797"/>
<dbReference type="UniPathway" id="UPA00041">
    <property type="reaction ID" value="UER00436"/>
</dbReference>
<dbReference type="Proteomes" id="UP000001425">
    <property type="component" value="Chromosome"/>
</dbReference>
<dbReference type="GO" id="GO:0005737">
    <property type="term" value="C:cytoplasm"/>
    <property type="evidence" value="ECO:0007669"/>
    <property type="project" value="UniProtKB-SubCell"/>
</dbReference>
<dbReference type="GO" id="GO:1990102">
    <property type="term" value="C:DnaA-DiaA complex"/>
    <property type="evidence" value="ECO:0000318"/>
    <property type="project" value="GO_Central"/>
</dbReference>
<dbReference type="GO" id="GO:0097367">
    <property type="term" value="F:carbohydrate derivative binding"/>
    <property type="evidence" value="ECO:0007669"/>
    <property type="project" value="InterPro"/>
</dbReference>
<dbReference type="GO" id="GO:0008968">
    <property type="term" value="F:D-sedoheptulose 7-phosphate isomerase activity"/>
    <property type="evidence" value="ECO:0007669"/>
    <property type="project" value="UniProtKB-UniRule"/>
</dbReference>
<dbReference type="GO" id="GO:0008270">
    <property type="term" value="F:zinc ion binding"/>
    <property type="evidence" value="ECO:0007669"/>
    <property type="project" value="UniProtKB-UniRule"/>
</dbReference>
<dbReference type="GO" id="GO:0005975">
    <property type="term" value="P:carbohydrate metabolic process"/>
    <property type="evidence" value="ECO:0007669"/>
    <property type="project" value="UniProtKB-UniRule"/>
</dbReference>
<dbReference type="GO" id="GO:2001061">
    <property type="term" value="P:D-glycero-D-manno-heptose 7-phosphate biosynthetic process"/>
    <property type="evidence" value="ECO:0007669"/>
    <property type="project" value="UniProtKB-UniPathway"/>
</dbReference>
<dbReference type="GO" id="GO:0032298">
    <property type="term" value="P:positive regulation of DNA-templated DNA replication initiation"/>
    <property type="evidence" value="ECO:0000318"/>
    <property type="project" value="GO_Central"/>
</dbReference>
<dbReference type="CDD" id="cd05006">
    <property type="entry name" value="SIS_GmhA"/>
    <property type="match status" value="1"/>
</dbReference>
<dbReference type="Gene3D" id="3.40.50.10490">
    <property type="entry name" value="Glucose-6-phosphate isomerase like protein, domain 1"/>
    <property type="match status" value="1"/>
</dbReference>
<dbReference type="HAMAP" id="MF_00067">
    <property type="entry name" value="GmhA"/>
    <property type="match status" value="1"/>
</dbReference>
<dbReference type="InterPro" id="IPR035461">
    <property type="entry name" value="GmhA/DiaA"/>
</dbReference>
<dbReference type="InterPro" id="IPR004515">
    <property type="entry name" value="Phosphoheptose_Isoase"/>
</dbReference>
<dbReference type="InterPro" id="IPR001347">
    <property type="entry name" value="SIS_dom"/>
</dbReference>
<dbReference type="InterPro" id="IPR046348">
    <property type="entry name" value="SIS_dom_sf"/>
</dbReference>
<dbReference type="InterPro" id="IPR050099">
    <property type="entry name" value="SIS_GmhA/DiaA_subfam"/>
</dbReference>
<dbReference type="NCBIfam" id="TIGR00441">
    <property type="entry name" value="gmhA"/>
    <property type="match status" value="1"/>
</dbReference>
<dbReference type="PANTHER" id="PTHR30390:SF6">
    <property type="entry name" value="DNAA INITIATOR-ASSOCIATING PROTEIN DIAA"/>
    <property type="match status" value="1"/>
</dbReference>
<dbReference type="PANTHER" id="PTHR30390">
    <property type="entry name" value="SEDOHEPTULOSE 7-PHOSPHATE ISOMERASE / DNAA INITIATOR-ASSOCIATING FACTOR FOR REPLICATION INITIATION"/>
    <property type="match status" value="1"/>
</dbReference>
<dbReference type="Pfam" id="PF13580">
    <property type="entry name" value="SIS_2"/>
    <property type="match status" value="1"/>
</dbReference>
<dbReference type="SUPFAM" id="SSF53697">
    <property type="entry name" value="SIS domain"/>
    <property type="match status" value="1"/>
</dbReference>
<dbReference type="PROSITE" id="PS51464">
    <property type="entry name" value="SIS"/>
    <property type="match status" value="1"/>
</dbReference>
<keyword id="KW-0119">Carbohydrate metabolism</keyword>
<keyword id="KW-0963">Cytoplasm</keyword>
<keyword id="KW-0413">Isomerase</keyword>
<keyword id="KW-0479">Metal-binding</keyword>
<keyword id="KW-1185">Reference proteome</keyword>
<keyword id="KW-0862">Zinc</keyword>
<comment type="function">
    <text evidence="1">Catalyzes the isomerization of sedoheptulose 7-phosphate in D-glycero-D-manno-heptose 7-phosphate.</text>
</comment>
<comment type="catalytic activity">
    <reaction evidence="1">
        <text>2 D-sedoheptulose 7-phosphate = D-glycero-alpha-D-manno-heptose 7-phosphate + D-glycero-beta-D-manno-heptose 7-phosphate</text>
        <dbReference type="Rhea" id="RHEA:27489"/>
        <dbReference type="ChEBI" id="CHEBI:57483"/>
        <dbReference type="ChEBI" id="CHEBI:60203"/>
        <dbReference type="ChEBI" id="CHEBI:60204"/>
        <dbReference type="EC" id="5.3.1.28"/>
    </reaction>
</comment>
<comment type="cofactor">
    <cofactor evidence="1">
        <name>Zn(2+)</name>
        <dbReference type="ChEBI" id="CHEBI:29105"/>
    </cofactor>
    <text evidence="1">Binds 1 zinc ion per subunit.</text>
</comment>
<comment type="pathway">
    <text evidence="1">Carbohydrate biosynthesis; D-glycero-D-manno-heptose 7-phosphate biosynthesis; D-glycero-alpha-D-manno-heptose 7-phosphate and D-glycero-beta-D-manno-heptose 7-phosphate from sedoheptulose 7-phosphate: step 1/1.</text>
</comment>
<comment type="subcellular location">
    <subcellularLocation>
        <location evidence="1">Cytoplasm</location>
    </subcellularLocation>
</comment>
<comment type="miscellaneous">
    <text evidence="1">The reaction produces a racemic mixture of D-glycero-alpha-D-manno-heptose 7-phosphate and D-glycero-beta-D-manno-heptose 7-phosphate.</text>
</comment>
<comment type="similarity">
    <text evidence="1">Belongs to the SIS family. GmhA subfamily.</text>
</comment>
<proteinExistence type="inferred from homology"/>
<evidence type="ECO:0000255" key="1">
    <source>
        <dbReference type="HAMAP-Rule" id="MF_00067"/>
    </source>
</evidence>